<keyword id="KW-0963">Cytoplasm</keyword>
<keyword id="KW-0378">Hydrolase</keyword>
<keyword id="KW-0546">Nucleotide metabolism</keyword>
<keyword id="KW-1185">Reference proteome</keyword>
<evidence type="ECO:0000255" key="1">
    <source>
        <dbReference type="HAMAP-Rule" id="MF_00528"/>
    </source>
</evidence>
<name>NTPPB_ALKEH</name>
<dbReference type="EC" id="3.6.1.-" evidence="1"/>
<dbReference type="EMBL" id="CP000453">
    <property type="protein sequence ID" value="ABI56776.1"/>
    <property type="molecule type" value="Genomic_DNA"/>
</dbReference>
<dbReference type="RefSeq" id="WP_011629171.1">
    <property type="nucleotide sequence ID" value="NC_008340.1"/>
</dbReference>
<dbReference type="SMR" id="Q0A8R1"/>
<dbReference type="KEGG" id="aeh:Mlg_1427"/>
<dbReference type="eggNOG" id="COG0424">
    <property type="taxonomic scope" value="Bacteria"/>
</dbReference>
<dbReference type="HOGENOM" id="CLU_040416_1_0_6"/>
<dbReference type="OrthoDB" id="9813694at2"/>
<dbReference type="Proteomes" id="UP000001962">
    <property type="component" value="Chromosome"/>
</dbReference>
<dbReference type="GO" id="GO:0005737">
    <property type="term" value="C:cytoplasm"/>
    <property type="evidence" value="ECO:0007669"/>
    <property type="project" value="UniProtKB-SubCell"/>
</dbReference>
<dbReference type="GO" id="GO:0047429">
    <property type="term" value="F:nucleoside triphosphate diphosphatase activity"/>
    <property type="evidence" value="ECO:0007669"/>
    <property type="project" value="InterPro"/>
</dbReference>
<dbReference type="GO" id="GO:0009117">
    <property type="term" value="P:nucleotide metabolic process"/>
    <property type="evidence" value="ECO:0007669"/>
    <property type="project" value="UniProtKB-KW"/>
</dbReference>
<dbReference type="CDD" id="cd00555">
    <property type="entry name" value="Maf"/>
    <property type="match status" value="1"/>
</dbReference>
<dbReference type="FunFam" id="3.90.950.10:FF:000005">
    <property type="entry name" value="7-methyl-GTP pyrophosphatase"/>
    <property type="match status" value="1"/>
</dbReference>
<dbReference type="Gene3D" id="3.90.950.10">
    <property type="match status" value="1"/>
</dbReference>
<dbReference type="HAMAP" id="MF_00528">
    <property type="entry name" value="Maf"/>
    <property type="match status" value="1"/>
</dbReference>
<dbReference type="InterPro" id="IPR029001">
    <property type="entry name" value="ITPase-like_fam"/>
</dbReference>
<dbReference type="InterPro" id="IPR003697">
    <property type="entry name" value="Maf-like"/>
</dbReference>
<dbReference type="NCBIfam" id="TIGR00172">
    <property type="entry name" value="maf"/>
    <property type="match status" value="1"/>
</dbReference>
<dbReference type="PANTHER" id="PTHR43213:SF10">
    <property type="entry name" value="7-METHYL-GTP PYROPHOSPHATASE"/>
    <property type="match status" value="1"/>
</dbReference>
<dbReference type="PANTHER" id="PTHR43213">
    <property type="entry name" value="BIFUNCTIONAL DTTP/UTP PYROPHOSPHATASE/METHYLTRANSFERASE PROTEIN-RELATED"/>
    <property type="match status" value="1"/>
</dbReference>
<dbReference type="Pfam" id="PF02545">
    <property type="entry name" value="Maf"/>
    <property type="match status" value="1"/>
</dbReference>
<dbReference type="PIRSF" id="PIRSF006305">
    <property type="entry name" value="Maf"/>
    <property type="match status" value="1"/>
</dbReference>
<dbReference type="SUPFAM" id="SSF52972">
    <property type="entry name" value="ITPase-like"/>
    <property type="match status" value="1"/>
</dbReference>
<accession>Q0A8R1</accession>
<protein>
    <recommendedName>
        <fullName evidence="1">7-methyl-GTP pyrophosphatase</fullName>
        <shortName evidence="1">m(7)GTP pyrophosphatase</shortName>
        <ecNumber evidence="1">3.6.1.-</ecNumber>
    </recommendedName>
</protein>
<comment type="function">
    <text evidence="1">Nucleoside triphosphate pyrophosphatase that hydrolyzes 7-methyl-GTP (m(7)GTP). May have a dual role in cell division arrest and in preventing the incorporation of modified nucleotides into cellular nucleic acids.</text>
</comment>
<comment type="catalytic activity">
    <reaction evidence="1">
        <text>N(7)-methyl-GTP + H2O = N(7)-methyl-GMP + diphosphate + H(+)</text>
        <dbReference type="Rhea" id="RHEA:58744"/>
        <dbReference type="ChEBI" id="CHEBI:15377"/>
        <dbReference type="ChEBI" id="CHEBI:15378"/>
        <dbReference type="ChEBI" id="CHEBI:33019"/>
        <dbReference type="ChEBI" id="CHEBI:58285"/>
        <dbReference type="ChEBI" id="CHEBI:87133"/>
    </reaction>
</comment>
<comment type="cofactor">
    <cofactor evidence="1">
        <name>a divalent metal cation</name>
        <dbReference type="ChEBI" id="CHEBI:60240"/>
    </cofactor>
</comment>
<comment type="subcellular location">
    <subcellularLocation>
        <location evidence="1">Cytoplasm</location>
    </subcellularLocation>
</comment>
<comment type="similarity">
    <text evidence="1">Belongs to the Maf family. YceF subfamily.</text>
</comment>
<sequence>MAERPPLILASRSPYRRALLEQVRLPHEAIPADVDESRHPDEPAHDYVLRLARAKAEAVAERRPDALVIGSDQAAVLGERVLGKPGSEARAREQLATASGQCVTFLTGVAVVHAAGGRRQSDVVPYRVHFRDLDETTIARYVALEQPLDCAGSFKSEGLGAVLFQRMEGSDPNALIGLPLIRLFDFLLACGYPLIGSEE</sequence>
<organism>
    <name type="scientific">Alkalilimnicola ehrlichii (strain ATCC BAA-1101 / DSM 17681 / MLHE-1)</name>
    <dbReference type="NCBI Taxonomy" id="187272"/>
    <lineage>
        <taxon>Bacteria</taxon>
        <taxon>Pseudomonadati</taxon>
        <taxon>Pseudomonadota</taxon>
        <taxon>Gammaproteobacteria</taxon>
        <taxon>Chromatiales</taxon>
        <taxon>Ectothiorhodospiraceae</taxon>
        <taxon>Alkalilimnicola</taxon>
    </lineage>
</organism>
<proteinExistence type="inferred from homology"/>
<reference key="1">
    <citation type="submission" date="2006-08" db="EMBL/GenBank/DDBJ databases">
        <title>Complete sequence of Alkalilimnicola ehrilichei MLHE-1.</title>
        <authorList>
            <person name="Copeland A."/>
            <person name="Lucas S."/>
            <person name="Lapidus A."/>
            <person name="Barry K."/>
            <person name="Detter J.C."/>
            <person name="Glavina del Rio T."/>
            <person name="Hammon N."/>
            <person name="Israni S."/>
            <person name="Dalin E."/>
            <person name="Tice H."/>
            <person name="Pitluck S."/>
            <person name="Sims D."/>
            <person name="Brettin T."/>
            <person name="Bruce D."/>
            <person name="Han C."/>
            <person name="Tapia R."/>
            <person name="Gilna P."/>
            <person name="Schmutz J."/>
            <person name="Larimer F."/>
            <person name="Land M."/>
            <person name="Hauser L."/>
            <person name="Kyrpides N."/>
            <person name="Mikhailova N."/>
            <person name="Oremland R.S."/>
            <person name="Hoeft S.E."/>
            <person name="Switzer-Blum J."/>
            <person name="Kulp T."/>
            <person name="King G."/>
            <person name="Tabita R."/>
            <person name="Witte B."/>
            <person name="Santini J.M."/>
            <person name="Basu P."/>
            <person name="Hollibaugh J.T."/>
            <person name="Xie G."/>
            <person name="Stolz J.F."/>
            <person name="Richardson P."/>
        </authorList>
    </citation>
    <scope>NUCLEOTIDE SEQUENCE [LARGE SCALE GENOMIC DNA]</scope>
    <source>
        <strain>ATCC BAA-1101 / DSM 17681 / MLHE-1</strain>
    </source>
</reference>
<feature type="chain" id="PRO_0000267241" description="7-methyl-GTP pyrophosphatase">
    <location>
        <begin position="1"/>
        <end position="199"/>
    </location>
</feature>
<feature type="active site" description="Proton acceptor" evidence="1">
    <location>
        <position position="72"/>
    </location>
</feature>
<feature type="site" description="Important for substrate specificity" evidence="1">
    <location>
        <position position="15"/>
    </location>
</feature>
<feature type="site" description="Important for substrate specificity" evidence="1">
    <location>
        <position position="73"/>
    </location>
</feature>
<feature type="site" description="Important for substrate specificity" evidence="1">
    <location>
        <position position="157"/>
    </location>
</feature>
<gene>
    <name type="ordered locus">Mlg_1427</name>
</gene>